<sequence length="496" mass="56356">MEIIIISLCLATILAFLLLKPLLNRTVAKDNLPPSPWRVPVIGNLHQLSLHPHRSLRSLSHRYGPLMLLHFGRVPILVVSSSDVAHDLMKTHDLKVANRPRLKVIETILNGGREVVFSPYGDYWRQIKTVCVVHLLNKKMVQSFAKVREEERSVMMEKVEKASSDSSPLNLSKLLITLTSDVASRVSFGKKHSNEASMSDFKNQVRKITELVGGFPVSEYIPCLAWIDQIRGLYNRAEEVSKIFGDLMDKVVQEHLDATNKPTKDFVDILLSFERQSKDGIEVRRSDIKFIILDIFLGGTTTTNSLLEWTMTELIRHPECMKKLQDEIRGDATNLTIYRSHEEVEDMKYLKAVIKEGLRLHPPFPLLVLRLLTQDVKLKGYDIAAGTQVITNAWAIQRDIVTWGIDAEEFRPERHLDSPLDFRGTNFEYIPFGSGRRICPGIGFAMALVEVTLANLVNRFNWRMDARLSGDEYDLAEATGIDVCRKFPLIVFPSNA</sequence>
<comment type="cofactor">
    <cofactor evidence="1">
        <name>heme</name>
        <dbReference type="ChEBI" id="CHEBI:30413"/>
    </cofactor>
</comment>
<comment type="subcellular location">
    <subcellularLocation>
        <location evidence="3">Membrane</location>
        <topology evidence="3">Single-pass membrane protein</topology>
    </subcellularLocation>
</comment>
<comment type="similarity">
    <text evidence="3">Belongs to the cytochrome P450 family.</text>
</comment>
<feature type="chain" id="PRO_0000052066" description="Cytochrome P450 71A15">
    <location>
        <begin position="1"/>
        <end position="496"/>
    </location>
</feature>
<feature type="transmembrane region" description="Helical" evidence="2">
    <location>
        <begin position="3"/>
        <end position="23"/>
    </location>
</feature>
<feature type="binding site" description="axial binding residue" evidence="1">
    <location>
        <position position="439"/>
    </location>
    <ligand>
        <name>heme</name>
        <dbReference type="ChEBI" id="CHEBI:30413"/>
    </ligand>
    <ligandPart>
        <name>Fe</name>
        <dbReference type="ChEBI" id="CHEBI:18248"/>
    </ligandPart>
</feature>
<proteinExistence type="inferred from homology"/>
<dbReference type="EC" id="1.14.-.-"/>
<dbReference type="EMBL" id="AF069716">
    <property type="status" value="NOT_ANNOTATED_CDS"/>
    <property type="molecule type" value="Genomic_DNA"/>
</dbReference>
<dbReference type="EMBL" id="CP002688">
    <property type="protein sequence ID" value="AED93381.1"/>
    <property type="molecule type" value="Genomic_DNA"/>
</dbReference>
<dbReference type="RefSeq" id="NP_197877.1">
    <property type="nucleotide sequence ID" value="NM_122404.1"/>
</dbReference>
<dbReference type="SMR" id="P58046"/>
<dbReference type="FunCoup" id="P58046">
    <property type="interactions" value="180"/>
</dbReference>
<dbReference type="iPTMnet" id="P58046"/>
<dbReference type="PaxDb" id="3702-AT5G24950.1"/>
<dbReference type="ProteomicsDB" id="239112"/>
<dbReference type="EnsemblPlants" id="AT5G24950.1">
    <property type="protein sequence ID" value="AT5G24950.1"/>
    <property type="gene ID" value="AT5G24950"/>
</dbReference>
<dbReference type="GeneID" id="832565"/>
<dbReference type="Gramene" id="AT5G24950.1">
    <property type="protein sequence ID" value="AT5G24950.1"/>
    <property type="gene ID" value="AT5G24950"/>
</dbReference>
<dbReference type="KEGG" id="ath:AT5G24950"/>
<dbReference type="Araport" id="AT5G24950"/>
<dbReference type="TAIR" id="AT5G24950">
    <property type="gene designation" value="CYP71A15"/>
</dbReference>
<dbReference type="eggNOG" id="KOG0156">
    <property type="taxonomic scope" value="Eukaryota"/>
</dbReference>
<dbReference type="HOGENOM" id="CLU_001570_4_1_1"/>
<dbReference type="InParanoid" id="P58046"/>
<dbReference type="OMA" id="LAWIDQI"/>
<dbReference type="PhylomeDB" id="P58046"/>
<dbReference type="PRO" id="PR:P58046"/>
<dbReference type="Proteomes" id="UP000006548">
    <property type="component" value="Chromosome 5"/>
</dbReference>
<dbReference type="ExpressionAtlas" id="P58046">
    <property type="expression patterns" value="baseline and differential"/>
</dbReference>
<dbReference type="GO" id="GO:0016020">
    <property type="term" value="C:membrane"/>
    <property type="evidence" value="ECO:0007669"/>
    <property type="project" value="UniProtKB-SubCell"/>
</dbReference>
<dbReference type="GO" id="GO:0020037">
    <property type="term" value="F:heme binding"/>
    <property type="evidence" value="ECO:0007669"/>
    <property type="project" value="InterPro"/>
</dbReference>
<dbReference type="GO" id="GO:0005506">
    <property type="term" value="F:iron ion binding"/>
    <property type="evidence" value="ECO:0007669"/>
    <property type="project" value="InterPro"/>
</dbReference>
<dbReference type="GO" id="GO:0004497">
    <property type="term" value="F:monooxygenase activity"/>
    <property type="evidence" value="ECO:0007669"/>
    <property type="project" value="UniProtKB-KW"/>
</dbReference>
<dbReference type="GO" id="GO:0016705">
    <property type="term" value="F:oxidoreductase activity, acting on paired donors, with incorporation or reduction of molecular oxygen"/>
    <property type="evidence" value="ECO:0007669"/>
    <property type="project" value="InterPro"/>
</dbReference>
<dbReference type="CDD" id="cd11072">
    <property type="entry name" value="CYP71-like"/>
    <property type="match status" value="1"/>
</dbReference>
<dbReference type="FunFam" id="1.10.630.10:FF:000011">
    <property type="entry name" value="Cytochrome P450 83B1"/>
    <property type="match status" value="1"/>
</dbReference>
<dbReference type="Gene3D" id="1.10.630.10">
    <property type="entry name" value="Cytochrome P450"/>
    <property type="match status" value="1"/>
</dbReference>
<dbReference type="InterPro" id="IPR001128">
    <property type="entry name" value="Cyt_P450"/>
</dbReference>
<dbReference type="InterPro" id="IPR017972">
    <property type="entry name" value="Cyt_P450_CS"/>
</dbReference>
<dbReference type="InterPro" id="IPR002401">
    <property type="entry name" value="Cyt_P450_E_grp-I"/>
</dbReference>
<dbReference type="InterPro" id="IPR036396">
    <property type="entry name" value="Cyt_P450_sf"/>
</dbReference>
<dbReference type="PANTHER" id="PTHR47955:SF15">
    <property type="entry name" value="CYTOCHROME P450 71A2-LIKE"/>
    <property type="match status" value="1"/>
</dbReference>
<dbReference type="PANTHER" id="PTHR47955">
    <property type="entry name" value="CYTOCHROME P450 FAMILY 71 PROTEIN"/>
    <property type="match status" value="1"/>
</dbReference>
<dbReference type="Pfam" id="PF00067">
    <property type="entry name" value="p450"/>
    <property type="match status" value="1"/>
</dbReference>
<dbReference type="PRINTS" id="PR00463">
    <property type="entry name" value="EP450I"/>
</dbReference>
<dbReference type="PRINTS" id="PR00385">
    <property type="entry name" value="P450"/>
</dbReference>
<dbReference type="SUPFAM" id="SSF48264">
    <property type="entry name" value="Cytochrome P450"/>
    <property type="match status" value="1"/>
</dbReference>
<dbReference type="PROSITE" id="PS00086">
    <property type="entry name" value="CYTOCHROME_P450"/>
    <property type="match status" value="1"/>
</dbReference>
<reference key="1">
    <citation type="journal article" date="2000" name="Nature">
        <title>Sequence and analysis of chromosome 5 of the plant Arabidopsis thaliana.</title>
        <authorList>
            <person name="Tabata S."/>
            <person name="Kaneko T."/>
            <person name="Nakamura Y."/>
            <person name="Kotani H."/>
            <person name="Kato T."/>
            <person name="Asamizu E."/>
            <person name="Miyajima N."/>
            <person name="Sasamoto S."/>
            <person name="Kimura T."/>
            <person name="Hosouchi T."/>
            <person name="Kawashima K."/>
            <person name="Kohara M."/>
            <person name="Matsumoto M."/>
            <person name="Matsuno A."/>
            <person name="Muraki A."/>
            <person name="Nakayama S."/>
            <person name="Nakazaki N."/>
            <person name="Naruo K."/>
            <person name="Okumura S."/>
            <person name="Shinpo S."/>
            <person name="Takeuchi C."/>
            <person name="Wada T."/>
            <person name="Watanabe A."/>
            <person name="Yamada M."/>
            <person name="Yasuda M."/>
            <person name="Sato S."/>
            <person name="de la Bastide M."/>
            <person name="Huang E."/>
            <person name="Spiegel L."/>
            <person name="Gnoj L."/>
            <person name="O'Shaughnessy A."/>
            <person name="Preston R."/>
            <person name="Habermann K."/>
            <person name="Murray J."/>
            <person name="Johnson D."/>
            <person name="Rohlfing T."/>
            <person name="Nelson J."/>
            <person name="Stoneking T."/>
            <person name="Pepin K."/>
            <person name="Spieth J."/>
            <person name="Sekhon M."/>
            <person name="Armstrong J."/>
            <person name="Becker M."/>
            <person name="Belter E."/>
            <person name="Cordum H."/>
            <person name="Cordes M."/>
            <person name="Courtney L."/>
            <person name="Courtney W."/>
            <person name="Dante M."/>
            <person name="Du H."/>
            <person name="Edwards J."/>
            <person name="Fryman J."/>
            <person name="Haakensen B."/>
            <person name="Lamar E."/>
            <person name="Latreille P."/>
            <person name="Leonard S."/>
            <person name="Meyer R."/>
            <person name="Mulvaney E."/>
            <person name="Ozersky P."/>
            <person name="Riley A."/>
            <person name="Strowmatt C."/>
            <person name="Wagner-McPherson C."/>
            <person name="Wollam A."/>
            <person name="Yoakum M."/>
            <person name="Bell M."/>
            <person name="Dedhia N."/>
            <person name="Parnell L."/>
            <person name="Shah R."/>
            <person name="Rodriguez M."/>
            <person name="Hoon See L."/>
            <person name="Vil D."/>
            <person name="Baker J."/>
            <person name="Kirchoff K."/>
            <person name="Toth K."/>
            <person name="King L."/>
            <person name="Bahret A."/>
            <person name="Miller B."/>
            <person name="Marra M.A."/>
            <person name="Martienssen R."/>
            <person name="McCombie W.R."/>
            <person name="Wilson R.K."/>
            <person name="Murphy G."/>
            <person name="Bancroft I."/>
            <person name="Volckaert G."/>
            <person name="Wambutt R."/>
            <person name="Duesterhoeft A."/>
            <person name="Stiekema W."/>
            <person name="Pohl T."/>
            <person name="Entian K.-D."/>
            <person name="Terryn N."/>
            <person name="Hartley N."/>
            <person name="Bent E."/>
            <person name="Johnson S."/>
            <person name="Langham S.-A."/>
            <person name="McCullagh B."/>
            <person name="Robben J."/>
            <person name="Grymonprez B."/>
            <person name="Zimmermann W."/>
            <person name="Ramsperger U."/>
            <person name="Wedler H."/>
            <person name="Balke K."/>
            <person name="Wedler E."/>
            <person name="Peters S."/>
            <person name="van Staveren M."/>
            <person name="Dirkse W."/>
            <person name="Mooijman P."/>
            <person name="Klein Lankhorst R."/>
            <person name="Weitzenegger T."/>
            <person name="Bothe G."/>
            <person name="Rose M."/>
            <person name="Hauf J."/>
            <person name="Berneiser S."/>
            <person name="Hempel S."/>
            <person name="Feldpausch M."/>
            <person name="Lamberth S."/>
            <person name="Villarroel R."/>
            <person name="Gielen J."/>
            <person name="Ardiles W."/>
            <person name="Bents O."/>
            <person name="Lemcke K."/>
            <person name="Kolesov G."/>
            <person name="Mayer K.F.X."/>
            <person name="Rudd S."/>
            <person name="Schoof H."/>
            <person name="Schueller C."/>
            <person name="Zaccaria P."/>
            <person name="Mewes H.-W."/>
            <person name="Bevan M."/>
            <person name="Fransz P.F."/>
        </authorList>
    </citation>
    <scope>NUCLEOTIDE SEQUENCE [LARGE SCALE GENOMIC DNA]</scope>
    <source>
        <strain>cv. Columbia</strain>
    </source>
</reference>
<reference key="2">
    <citation type="journal article" date="2017" name="Plant J.">
        <title>Araport11: a complete reannotation of the Arabidopsis thaliana reference genome.</title>
        <authorList>
            <person name="Cheng C.Y."/>
            <person name="Krishnakumar V."/>
            <person name="Chan A.P."/>
            <person name="Thibaud-Nissen F."/>
            <person name="Schobel S."/>
            <person name="Town C.D."/>
        </authorList>
    </citation>
    <scope>GENOME REANNOTATION</scope>
    <source>
        <strain>cv. Columbia</strain>
    </source>
</reference>
<accession>P58046</accession>
<evidence type="ECO:0000250" key="1"/>
<evidence type="ECO:0000255" key="2"/>
<evidence type="ECO:0000305" key="3"/>
<protein>
    <recommendedName>
        <fullName>Cytochrome P450 71A15</fullName>
        <ecNumber>1.14.-.-</ecNumber>
    </recommendedName>
</protein>
<organism>
    <name type="scientific">Arabidopsis thaliana</name>
    <name type="common">Mouse-ear cress</name>
    <dbReference type="NCBI Taxonomy" id="3702"/>
    <lineage>
        <taxon>Eukaryota</taxon>
        <taxon>Viridiplantae</taxon>
        <taxon>Streptophyta</taxon>
        <taxon>Embryophyta</taxon>
        <taxon>Tracheophyta</taxon>
        <taxon>Spermatophyta</taxon>
        <taxon>Magnoliopsida</taxon>
        <taxon>eudicotyledons</taxon>
        <taxon>Gunneridae</taxon>
        <taxon>Pentapetalae</taxon>
        <taxon>rosids</taxon>
        <taxon>malvids</taxon>
        <taxon>Brassicales</taxon>
        <taxon>Brassicaceae</taxon>
        <taxon>Camelineae</taxon>
        <taxon>Arabidopsis</taxon>
    </lineage>
</organism>
<name>C71AF_ARATH</name>
<gene>
    <name type="primary">CYP71A15</name>
    <name type="ordered locus">At5g24950</name>
    <name type="ORF">F6A4_160</name>
</gene>
<keyword id="KW-0349">Heme</keyword>
<keyword id="KW-0408">Iron</keyword>
<keyword id="KW-0472">Membrane</keyword>
<keyword id="KW-0479">Metal-binding</keyword>
<keyword id="KW-0503">Monooxygenase</keyword>
<keyword id="KW-0560">Oxidoreductase</keyword>
<keyword id="KW-1185">Reference proteome</keyword>
<keyword id="KW-0812">Transmembrane</keyword>
<keyword id="KW-1133">Transmembrane helix</keyword>